<feature type="signal peptide" evidence="4">
    <location>
        <begin position="1"/>
        <end position="26"/>
    </location>
</feature>
<feature type="propeptide" id="PRO_0000009927">
    <location>
        <begin position="27"/>
        <end position="57"/>
    </location>
</feature>
<feature type="peptide" id="PRO_0000009928" description="Neuropeptide NPSF" evidence="4">
    <location>
        <begin position="58"/>
        <end position="94"/>
    </location>
</feature>
<feature type="peptide" id="PRO_0000401485" description="Neuropeptide RFRP-1" evidence="4">
    <location>
        <begin position="83"/>
        <end position="94"/>
    </location>
</feature>
<feature type="propeptide" id="PRO_0000009929">
    <location>
        <begin position="97"/>
        <end position="106"/>
    </location>
</feature>
<feature type="peptide" id="PRO_0000009930" description="Neuropeptide NPVF" evidence="4">
    <location>
        <begin position="108"/>
        <end position="125"/>
    </location>
</feature>
<feature type="propeptide" id="PRO_0000009931">
    <location>
        <begin position="128"/>
        <end position="188"/>
    </location>
</feature>
<feature type="region of interest" description="Disordered" evidence="5">
    <location>
        <begin position="116"/>
        <end position="144"/>
    </location>
</feature>
<feature type="region of interest" description="Disordered" evidence="5">
    <location>
        <begin position="163"/>
        <end position="188"/>
    </location>
</feature>
<feature type="modified residue" description="Phenylalanine amide" evidence="1">
    <location>
        <position position="94"/>
    </location>
</feature>
<feature type="modified residue" description="Phenylalanine amide" evidence="1">
    <location>
        <position position="125"/>
    </location>
</feature>
<feature type="splice variant" id="VSP_039963" description="In isoform 2." evidence="6">
    <location>
        <begin position="173"/>
        <end position="188"/>
    </location>
</feature>
<name>NPVF_MOUSE</name>
<organism evidence="8">
    <name type="scientific">Mus musculus</name>
    <name type="common">Mouse</name>
    <dbReference type="NCBI Taxonomy" id="10090"/>
    <lineage>
        <taxon>Eukaryota</taxon>
        <taxon>Metazoa</taxon>
        <taxon>Chordata</taxon>
        <taxon>Craniata</taxon>
        <taxon>Vertebrata</taxon>
        <taxon>Euteleostomi</taxon>
        <taxon>Mammalia</taxon>
        <taxon>Eutheria</taxon>
        <taxon>Euarchontoglires</taxon>
        <taxon>Glires</taxon>
        <taxon>Rodentia</taxon>
        <taxon>Myomorpha</taxon>
        <taxon>Muroidea</taxon>
        <taxon>Muridae</taxon>
        <taxon>Murinae</taxon>
        <taxon>Mus</taxon>
        <taxon>Mus</taxon>
    </lineage>
</organism>
<proteinExistence type="evidence at transcript level"/>
<evidence type="ECO:0000250" key="1"/>
<evidence type="ECO:0000250" key="2">
    <source>
        <dbReference type="UniProtKB" id="Q9ESQ9"/>
    </source>
</evidence>
<evidence type="ECO:0000250" key="3">
    <source>
        <dbReference type="UniProtKB" id="Q9HCQ7"/>
    </source>
</evidence>
<evidence type="ECO:0000255" key="4"/>
<evidence type="ECO:0000256" key="5">
    <source>
        <dbReference type="SAM" id="MobiDB-lite"/>
    </source>
</evidence>
<evidence type="ECO:0000303" key="6">
    <source>
    </source>
</evidence>
<evidence type="ECO:0000305" key="7"/>
<evidence type="ECO:0000312" key="8">
    <source>
        <dbReference type="EMBL" id="BAB17673.1"/>
    </source>
</evidence>
<dbReference type="EMBL" id="AB040289">
    <property type="protein sequence ID" value="BAB17673.1"/>
    <property type="molecule type" value="mRNA"/>
</dbReference>
<dbReference type="EMBL" id="AF330058">
    <property type="protein sequence ID" value="AAK94202.2"/>
    <property type="molecule type" value="mRNA"/>
</dbReference>
<dbReference type="CCDS" id="CCDS20133.1">
    <molecule id="Q9ESQ8-1"/>
</dbReference>
<dbReference type="RefSeq" id="NP_068692.1">
    <molecule id="Q9ESQ8-1"/>
    <property type="nucleotide sequence ID" value="NM_021892.2"/>
</dbReference>
<dbReference type="FunCoup" id="Q9ESQ8">
    <property type="interactions" value="372"/>
</dbReference>
<dbReference type="STRING" id="10090.ENSMUSP00000031853"/>
<dbReference type="iPTMnet" id="Q9ESQ8"/>
<dbReference type="PhosphoSitePlus" id="Q9ESQ8"/>
<dbReference type="PaxDb" id="10090-ENSMUSP00000031853"/>
<dbReference type="Antibodypedia" id="50012">
    <property type="antibodies" value="25 antibodies from 8 providers"/>
</dbReference>
<dbReference type="DNASU" id="60531"/>
<dbReference type="Ensembl" id="ENSMUST00000031853.8">
    <molecule id="Q9ESQ8-1"/>
    <property type="protein sequence ID" value="ENSMUSP00000031853.8"/>
    <property type="gene ID" value="ENSMUSG00000029831.8"/>
</dbReference>
<dbReference type="GeneID" id="60531"/>
<dbReference type="KEGG" id="mmu:60531"/>
<dbReference type="UCSC" id="uc009bxg.1">
    <molecule id="Q9ESQ8-1"/>
    <property type="organism name" value="mouse"/>
</dbReference>
<dbReference type="AGR" id="MGI:1926488"/>
<dbReference type="CTD" id="64111"/>
<dbReference type="MGI" id="MGI:1926488">
    <property type="gene designation" value="Npvf"/>
</dbReference>
<dbReference type="VEuPathDB" id="HostDB:ENSMUSG00000029831"/>
<dbReference type="eggNOG" id="ENOG502S5H9">
    <property type="taxonomic scope" value="Eukaryota"/>
</dbReference>
<dbReference type="GeneTree" id="ENSGT00390000003271"/>
<dbReference type="HOGENOM" id="CLU_120051_0_0_1"/>
<dbReference type="InParanoid" id="Q9ESQ8"/>
<dbReference type="OMA" id="KMPHSVA"/>
<dbReference type="OrthoDB" id="8834619at2759"/>
<dbReference type="PhylomeDB" id="Q9ESQ8"/>
<dbReference type="TreeFam" id="TF330935"/>
<dbReference type="BioGRID-ORCS" id="60531">
    <property type="hits" value="1 hit in 78 CRISPR screens"/>
</dbReference>
<dbReference type="PRO" id="PR:Q9ESQ8"/>
<dbReference type="Proteomes" id="UP000000589">
    <property type="component" value="Chromosome 6"/>
</dbReference>
<dbReference type="RNAct" id="Q9ESQ8">
    <property type="molecule type" value="protein"/>
</dbReference>
<dbReference type="Bgee" id="ENSMUSG00000029831">
    <property type="expression patterns" value="Expressed in dorsomedial nucleus of hypothalamus and 30 other cell types or tissues"/>
</dbReference>
<dbReference type="ExpressionAtlas" id="Q9ESQ8">
    <property type="expression patterns" value="baseline and differential"/>
</dbReference>
<dbReference type="GO" id="GO:0005615">
    <property type="term" value="C:extracellular space"/>
    <property type="evidence" value="ECO:0007669"/>
    <property type="project" value="Ensembl"/>
</dbReference>
<dbReference type="GO" id="GO:0160041">
    <property type="term" value="F:neuropeptide activity"/>
    <property type="evidence" value="ECO:0007669"/>
    <property type="project" value="Ensembl"/>
</dbReference>
<dbReference type="GO" id="GO:0032277">
    <property type="term" value="P:negative regulation of gonadotropin secretion"/>
    <property type="evidence" value="ECO:0007669"/>
    <property type="project" value="Ensembl"/>
</dbReference>
<dbReference type="GO" id="GO:0007218">
    <property type="term" value="P:neuropeptide signaling pathway"/>
    <property type="evidence" value="ECO:0007669"/>
    <property type="project" value="UniProtKB-KW"/>
</dbReference>
<dbReference type="InterPro" id="IPR026297">
    <property type="entry name" value="FMRFamide-related/fGRP"/>
</dbReference>
<dbReference type="PANTHER" id="PTHR14403:SF6">
    <property type="entry name" value="PRO-FMRFAMIDE-RELATED NEUROPEPTIDE VF"/>
    <property type="match status" value="1"/>
</dbReference>
<dbReference type="PANTHER" id="PTHR14403">
    <property type="entry name" value="RFAMIDE PEPTIDE GONADOTROPIN INHIBITORY HORMONE"/>
    <property type="match status" value="1"/>
</dbReference>
<keyword id="KW-0025">Alternative splicing</keyword>
<keyword id="KW-0027">Amidation</keyword>
<keyword id="KW-0165">Cleavage on pair of basic residues</keyword>
<keyword id="KW-0527">Neuropeptide</keyword>
<keyword id="KW-1185">Reference proteome</keyword>
<keyword id="KW-0964">Secreted</keyword>
<keyword id="KW-0732">Signal</keyword>
<accession>Q9ESQ8</accession>
<accession>Q920A4</accession>
<gene>
    <name type="primary">Npvf</name>
    <name type="synonym">Rfrp</name>
</gene>
<protein>
    <recommendedName>
        <fullName>Pro-FMRFamide-related neuropeptide VF</fullName>
    </recommendedName>
    <alternativeName>
        <fullName>FMRFamide-related peptides</fullName>
    </alternativeName>
    <component>
        <recommendedName>
            <fullName>Neuropeptide NPSF</fullName>
        </recommendedName>
    </component>
    <component>
        <recommendedName>
            <fullName>Neuropeptide RFRP-1</fullName>
        </recommendedName>
    </component>
    <component>
        <recommendedName>
            <fullName>Neuropeptide NPVF</fullName>
        </recommendedName>
        <alternativeName>
            <fullName>Neuropeptide RFRP-2</fullName>
        </alternativeName>
    </component>
</protein>
<reference evidence="7" key="1">
    <citation type="journal article" date="2000" name="Nat. Cell Biol.">
        <title>New neuropeptides containing carboxy-terminal RFamide and their receptor in mammals.</title>
        <authorList>
            <person name="Hinuma S."/>
            <person name="Shintani Y."/>
            <person name="Fukusumi S."/>
            <person name="Iijima N."/>
            <person name="Matsumoto Y."/>
            <person name="Hosoya M."/>
            <person name="Fujii R."/>
            <person name="Watanabe T."/>
            <person name="Kikuchi K."/>
            <person name="Terao Y."/>
            <person name="Yano T."/>
            <person name="Yamamoto T."/>
            <person name="Kawamata Y."/>
            <person name="Habata Y."/>
            <person name="Asada M."/>
            <person name="Kitada C."/>
            <person name="Kurokawa T."/>
            <person name="Onda H."/>
            <person name="Nishimura O."/>
            <person name="Tanaka M."/>
            <person name="Ibata Y."/>
            <person name="Fujino M."/>
        </authorList>
    </citation>
    <scope>NUCLEOTIDE SEQUENCE [MRNA] (ISOFORM 1)</scope>
    <source>
        <tissue>Brain</tissue>
    </source>
</reference>
<reference evidence="7" key="2">
    <citation type="journal article" date="2001" name="J. Biol. Chem.">
        <title>Identification and characterization of novel mammalian neuropeptide FF-like peptides that attenuate morphine-induced antinociception.</title>
        <authorList>
            <person name="Liu Q."/>
            <person name="Guan X.-M."/>
            <person name="Martin W.J."/>
            <person name="McDonald T.P."/>
            <person name="Clements M.K."/>
            <person name="Jiang Q."/>
            <person name="Zeng Z."/>
            <person name="Jacobson M."/>
            <person name="Williams D.L. Jr."/>
            <person name="Yu H."/>
            <person name="Bomford D."/>
            <person name="Figueroa D."/>
            <person name="Mallee J."/>
            <person name="Wang R."/>
            <person name="Evans J."/>
            <person name="Gould R."/>
            <person name="Austin C.P."/>
        </authorList>
    </citation>
    <scope>NUCLEOTIDE SEQUENCE [MRNA] (ISOFORM 2)</scope>
</reference>
<comment type="function">
    <molecule>Neuropeptide RFRP-1</molecule>
    <text evidence="2 3">Efficiently inhibits forskolin-induced production of cAMP. Acts as a potent negative regulator of gonadotropin synthesis and secretion (By similarity). Induces secretion of prolactin (By similarity).</text>
</comment>
<comment type="function">
    <molecule>Neuropeptide NPVF</molecule>
    <text evidence="3">Efficiently inhibits forskolin-induced production of cAMP. Blocks morphine-induced analgesia.</text>
</comment>
<comment type="subcellular location">
    <subcellularLocation>
        <location evidence="3">Secreted</location>
    </subcellularLocation>
</comment>
<comment type="alternative products">
    <event type="alternative splicing"/>
    <isoform>
        <id>Q9ESQ8-1</id>
        <name>1</name>
        <sequence type="displayed"/>
    </isoform>
    <isoform>
        <id>Q9ESQ8-2</id>
        <name>2</name>
        <sequence type="described" ref="VSP_039963"/>
    </isoform>
</comment>
<comment type="similarity">
    <text evidence="7">Belongs to the FARP (FMRFamide related peptide) family.</text>
</comment>
<sequence>MEIISLKRFILLTVATSSFLTSNTFCTDEFMMPHFHSKEGDGKYSQLRGIPKGEKERSVSFQELKDWGAKNVIKMSPAPANKVPHSAANLPLRFGRTIDEKRSPAARVNMEAGTRSHFPSLPQRFGRTTARSPKTPADLPQKPLHSLGSSELLYVMICQHQEIQSPGGKRTRRGAFVETDDAERKPEK</sequence>